<gene>
    <name evidence="1" type="primary">recF</name>
    <name type="ordered locus">SFV_3812</name>
</gene>
<accession>Q0SYP0</accession>
<name>RECF_SHIF8</name>
<organism>
    <name type="scientific">Shigella flexneri serotype 5b (strain 8401)</name>
    <dbReference type="NCBI Taxonomy" id="373384"/>
    <lineage>
        <taxon>Bacteria</taxon>
        <taxon>Pseudomonadati</taxon>
        <taxon>Pseudomonadota</taxon>
        <taxon>Gammaproteobacteria</taxon>
        <taxon>Enterobacterales</taxon>
        <taxon>Enterobacteriaceae</taxon>
        <taxon>Shigella</taxon>
    </lineage>
</organism>
<reference key="1">
    <citation type="journal article" date="2006" name="BMC Genomics">
        <title>Complete genome sequence of Shigella flexneri 5b and comparison with Shigella flexneri 2a.</title>
        <authorList>
            <person name="Nie H."/>
            <person name="Yang F."/>
            <person name="Zhang X."/>
            <person name="Yang J."/>
            <person name="Chen L."/>
            <person name="Wang J."/>
            <person name="Xiong Z."/>
            <person name="Peng J."/>
            <person name="Sun L."/>
            <person name="Dong J."/>
            <person name="Xue Y."/>
            <person name="Xu X."/>
            <person name="Chen S."/>
            <person name="Yao Z."/>
            <person name="Shen Y."/>
            <person name="Jin Q."/>
        </authorList>
    </citation>
    <scope>NUCLEOTIDE SEQUENCE [LARGE SCALE GENOMIC DNA]</scope>
    <source>
        <strain>8401</strain>
    </source>
</reference>
<feature type="chain" id="PRO_1000048580" description="DNA replication and repair protein RecF">
    <location>
        <begin position="1"/>
        <end position="357"/>
    </location>
</feature>
<feature type="binding site" evidence="1">
    <location>
        <begin position="30"/>
        <end position="37"/>
    </location>
    <ligand>
        <name>ATP</name>
        <dbReference type="ChEBI" id="CHEBI:30616"/>
    </ligand>
</feature>
<sequence length="357" mass="40505">MSLTRLLIRDFRNIETADLALSPGFNFLVGANGSGKTSVLEAIYTLGHGRAFRSLQIGCVIRHEQEAFVLHGRLQGEERETAIGLTKDKQGDSKVRIDGTDGHKVAELAHLMPMQLITPEGFTLLNGGPKYRRAFLDWGCFHNEPGFFTAWSNLKRLLKQRNAALRQVTRYEQLRPWDKELIPLAEQISTWRAEYSAGIAADMDDTCKQFLPEFSLTFSFQRGWEKETEYAEVLERNFERDRQLTYTAHGPHKADLRIRADGAPVEDTLSRGQLKLLMCALRLAQGEFLTRESGRRCLYLIDDFASELDDERRGLLASRLKATQSQVFVSAISAEHVIDMSDENSKMFTVEKGKITD</sequence>
<keyword id="KW-0067">ATP-binding</keyword>
<keyword id="KW-0963">Cytoplasm</keyword>
<keyword id="KW-0227">DNA damage</keyword>
<keyword id="KW-0234">DNA repair</keyword>
<keyword id="KW-0235">DNA replication</keyword>
<keyword id="KW-0238">DNA-binding</keyword>
<keyword id="KW-0547">Nucleotide-binding</keyword>
<keyword id="KW-0742">SOS response</keyword>
<dbReference type="EMBL" id="CP000266">
    <property type="protein sequence ID" value="ABF05825.1"/>
    <property type="molecule type" value="Genomic_DNA"/>
</dbReference>
<dbReference type="RefSeq" id="WP_000060095.1">
    <property type="nucleotide sequence ID" value="NC_008258.1"/>
</dbReference>
<dbReference type="SMR" id="Q0SYP0"/>
<dbReference type="KEGG" id="sfv:SFV_3812"/>
<dbReference type="HOGENOM" id="CLU_040267_0_0_6"/>
<dbReference type="Proteomes" id="UP000000659">
    <property type="component" value="Chromosome"/>
</dbReference>
<dbReference type="GO" id="GO:0005737">
    <property type="term" value="C:cytoplasm"/>
    <property type="evidence" value="ECO:0007669"/>
    <property type="project" value="UniProtKB-SubCell"/>
</dbReference>
<dbReference type="GO" id="GO:0005524">
    <property type="term" value="F:ATP binding"/>
    <property type="evidence" value="ECO:0007669"/>
    <property type="project" value="UniProtKB-UniRule"/>
</dbReference>
<dbReference type="GO" id="GO:0003697">
    <property type="term" value="F:single-stranded DNA binding"/>
    <property type="evidence" value="ECO:0007669"/>
    <property type="project" value="UniProtKB-UniRule"/>
</dbReference>
<dbReference type="GO" id="GO:0006260">
    <property type="term" value="P:DNA replication"/>
    <property type="evidence" value="ECO:0007669"/>
    <property type="project" value="UniProtKB-UniRule"/>
</dbReference>
<dbReference type="GO" id="GO:0000731">
    <property type="term" value="P:DNA synthesis involved in DNA repair"/>
    <property type="evidence" value="ECO:0007669"/>
    <property type="project" value="TreeGrafter"/>
</dbReference>
<dbReference type="GO" id="GO:0006302">
    <property type="term" value="P:double-strand break repair"/>
    <property type="evidence" value="ECO:0007669"/>
    <property type="project" value="TreeGrafter"/>
</dbReference>
<dbReference type="GO" id="GO:0009432">
    <property type="term" value="P:SOS response"/>
    <property type="evidence" value="ECO:0007669"/>
    <property type="project" value="UniProtKB-UniRule"/>
</dbReference>
<dbReference type="FunFam" id="1.20.1050.90:FF:000001">
    <property type="entry name" value="DNA replication and repair protein RecF"/>
    <property type="match status" value="1"/>
</dbReference>
<dbReference type="Gene3D" id="3.40.50.300">
    <property type="entry name" value="P-loop containing nucleotide triphosphate hydrolases"/>
    <property type="match status" value="1"/>
</dbReference>
<dbReference type="Gene3D" id="1.20.1050.90">
    <property type="entry name" value="RecF/RecN/SMC, N-terminal domain"/>
    <property type="match status" value="1"/>
</dbReference>
<dbReference type="HAMAP" id="MF_00365">
    <property type="entry name" value="RecF"/>
    <property type="match status" value="1"/>
</dbReference>
<dbReference type="InterPro" id="IPR001238">
    <property type="entry name" value="DNA-binding_RecF"/>
</dbReference>
<dbReference type="InterPro" id="IPR018078">
    <property type="entry name" value="DNA-binding_RecF_CS"/>
</dbReference>
<dbReference type="InterPro" id="IPR027417">
    <property type="entry name" value="P-loop_NTPase"/>
</dbReference>
<dbReference type="InterPro" id="IPR003395">
    <property type="entry name" value="RecF/RecN/SMC_N"/>
</dbReference>
<dbReference type="InterPro" id="IPR042174">
    <property type="entry name" value="RecF_2"/>
</dbReference>
<dbReference type="NCBIfam" id="TIGR00611">
    <property type="entry name" value="recf"/>
    <property type="match status" value="1"/>
</dbReference>
<dbReference type="PANTHER" id="PTHR32182">
    <property type="entry name" value="DNA REPLICATION AND REPAIR PROTEIN RECF"/>
    <property type="match status" value="1"/>
</dbReference>
<dbReference type="PANTHER" id="PTHR32182:SF0">
    <property type="entry name" value="DNA REPLICATION AND REPAIR PROTEIN RECF"/>
    <property type="match status" value="1"/>
</dbReference>
<dbReference type="Pfam" id="PF02463">
    <property type="entry name" value="SMC_N"/>
    <property type="match status" value="1"/>
</dbReference>
<dbReference type="SUPFAM" id="SSF52540">
    <property type="entry name" value="P-loop containing nucleoside triphosphate hydrolases"/>
    <property type="match status" value="1"/>
</dbReference>
<dbReference type="PROSITE" id="PS00617">
    <property type="entry name" value="RECF_1"/>
    <property type="match status" value="1"/>
</dbReference>
<dbReference type="PROSITE" id="PS00618">
    <property type="entry name" value="RECF_2"/>
    <property type="match status" value="1"/>
</dbReference>
<evidence type="ECO:0000255" key="1">
    <source>
        <dbReference type="HAMAP-Rule" id="MF_00365"/>
    </source>
</evidence>
<proteinExistence type="inferred from homology"/>
<protein>
    <recommendedName>
        <fullName evidence="1">DNA replication and repair protein RecF</fullName>
    </recommendedName>
</protein>
<comment type="function">
    <text evidence="1">The RecF protein is involved in DNA metabolism; it is required for DNA replication and normal SOS inducibility. RecF binds preferentially to single-stranded, linear DNA. It also seems to bind ATP.</text>
</comment>
<comment type="subcellular location">
    <subcellularLocation>
        <location evidence="1">Cytoplasm</location>
    </subcellularLocation>
</comment>
<comment type="similarity">
    <text evidence="1">Belongs to the RecF family.</text>
</comment>